<geneLocation type="mitochondrion"/>
<keyword id="KW-0249">Electron transport</keyword>
<keyword id="KW-0472">Membrane</keyword>
<keyword id="KW-0496">Mitochondrion</keyword>
<keyword id="KW-0999">Mitochondrion inner membrane</keyword>
<keyword id="KW-0520">NAD</keyword>
<keyword id="KW-0679">Respiratory chain</keyword>
<keyword id="KW-1278">Translocase</keyword>
<keyword id="KW-0812">Transmembrane</keyword>
<keyword id="KW-1133">Transmembrane helix</keyword>
<keyword id="KW-0813">Transport</keyword>
<keyword id="KW-0830">Ubiquinone</keyword>
<comment type="function">
    <text evidence="1">Core subunit of the mitochondrial membrane respiratory chain NADH dehydrogenase (Complex I) which catalyzes electron transfer from NADH through the respiratory chain, using ubiquinone as an electron acceptor. Part of the enzyme membrane arm which is embedded in the lipid bilayer and involved in proton translocation.</text>
</comment>
<comment type="catalytic activity">
    <reaction evidence="1">
        <text>a ubiquinone + NADH + 5 H(+)(in) = a ubiquinol + NAD(+) + 4 H(+)(out)</text>
        <dbReference type="Rhea" id="RHEA:29091"/>
        <dbReference type="Rhea" id="RHEA-COMP:9565"/>
        <dbReference type="Rhea" id="RHEA-COMP:9566"/>
        <dbReference type="ChEBI" id="CHEBI:15378"/>
        <dbReference type="ChEBI" id="CHEBI:16389"/>
        <dbReference type="ChEBI" id="CHEBI:17976"/>
        <dbReference type="ChEBI" id="CHEBI:57540"/>
        <dbReference type="ChEBI" id="CHEBI:57945"/>
        <dbReference type="EC" id="7.1.1.2"/>
    </reaction>
    <physiologicalReaction direction="left-to-right" evidence="1">
        <dbReference type="Rhea" id="RHEA:29092"/>
    </physiologicalReaction>
</comment>
<comment type="subunit">
    <text evidence="2">Core subunit of respiratory chain NADH dehydrogenase (Complex I) which is composed of 45 different subunits.</text>
</comment>
<comment type="subcellular location">
    <subcellularLocation>
        <location evidence="2">Mitochondrion inner membrane</location>
        <topology evidence="3">Multi-pass membrane protein</topology>
    </subcellularLocation>
</comment>
<comment type="similarity">
    <text evidence="4">Belongs to the complex I subunit 4L family.</text>
</comment>
<organism>
    <name type="scientific">Urotrichus talpoides</name>
    <name type="common">Japanese shrew mole</name>
    <dbReference type="NCBI Taxonomy" id="106106"/>
    <lineage>
        <taxon>Eukaryota</taxon>
        <taxon>Metazoa</taxon>
        <taxon>Chordata</taxon>
        <taxon>Craniata</taxon>
        <taxon>Vertebrata</taxon>
        <taxon>Euteleostomi</taxon>
        <taxon>Mammalia</taxon>
        <taxon>Eutheria</taxon>
        <taxon>Laurasiatheria</taxon>
        <taxon>Eulipotyphla</taxon>
        <taxon>Talpidae</taxon>
        <taxon>Urotrichus</taxon>
    </lineage>
</organism>
<gene>
    <name type="primary">MT-ND4L</name>
    <name type="synonym">MTND4L</name>
    <name type="synonym">NADH4L</name>
    <name type="synonym">ND4L</name>
</gene>
<protein>
    <recommendedName>
        <fullName>NADH-ubiquinone oxidoreductase chain 4L</fullName>
        <ecNumber>7.1.1.2</ecNumber>
    </recommendedName>
    <alternativeName>
        <fullName>NADH dehydrogenase subunit 4L</fullName>
    </alternativeName>
</protein>
<proteinExistence type="inferred from homology"/>
<dbReference type="EC" id="7.1.1.2"/>
<dbReference type="EMBL" id="AB099483">
    <property type="protein sequence ID" value="BAC78882.1"/>
    <property type="molecule type" value="Genomic_DNA"/>
</dbReference>
<dbReference type="RefSeq" id="NP_871769.1">
    <property type="nucleotide sequence ID" value="NC_005034.1"/>
</dbReference>
<dbReference type="SMR" id="Q7Y8D5"/>
<dbReference type="GeneID" id="1457794"/>
<dbReference type="CTD" id="4539"/>
<dbReference type="GO" id="GO:0005743">
    <property type="term" value="C:mitochondrial inner membrane"/>
    <property type="evidence" value="ECO:0000250"/>
    <property type="project" value="UniProtKB"/>
</dbReference>
<dbReference type="GO" id="GO:0045271">
    <property type="term" value="C:respiratory chain complex I"/>
    <property type="evidence" value="ECO:0000250"/>
    <property type="project" value="UniProtKB"/>
</dbReference>
<dbReference type="GO" id="GO:0008137">
    <property type="term" value="F:NADH dehydrogenase (ubiquinone) activity"/>
    <property type="evidence" value="ECO:0000250"/>
    <property type="project" value="UniProtKB"/>
</dbReference>
<dbReference type="GO" id="GO:0042773">
    <property type="term" value="P:ATP synthesis coupled electron transport"/>
    <property type="evidence" value="ECO:0007669"/>
    <property type="project" value="InterPro"/>
</dbReference>
<dbReference type="FunFam" id="1.10.287.3510:FF:000002">
    <property type="entry name" value="NADH-ubiquinone oxidoreductase chain 4L"/>
    <property type="match status" value="1"/>
</dbReference>
<dbReference type="Gene3D" id="1.10.287.3510">
    <property type="match status" value="1"/>
</dbReference>
<dbReference type="InterPro" id="IPR001133">
    <property type="entry name" value="NADH_UbQ_OxRdtase_chain4L/K"/>
</dbReference>
<dbReference type="InterPro" id="IPR039428">
    <property type="entry name" value="NUOK/Mnh_C1-like"/>
</dbReference>
<dbReference type="PANTHER" id="PTHR11434:SF0">
    <property type="entry name" value="NADH-UBIQUINONE OXIDOREDUCTASE CHAIN 4L"/>
    <property type="match status" value="1"/>
</dbReference>
<dbReference type="PANTHER" id="PTHR11434">
    <property type="entry name" value="NADH-UBIQUINONE OXIDOREDUCTASE SUBUNIT ND4L"/>
    <property type="match status" value="1"/>
</dbReference>
<dbReference type="Pfam" id="PF00420">
    <property type="entry name" value="Oxidored_q2"/>
    <property type="match status" value="1"/>
</dbReference>
<evidence type="ECO:0000250" key="1">
    <source>
        <dbReference type="UniProtKB" id="P03901"/>
    </source>
</evidence>
<evidence type="ECO:0000250" key="2">
    <source>
        <dbReference type="UniProtKB" id="P03902"/>
    </source>
</evidence>
<evidence type="ECO:0000255" key="3"/>
<evidence type="ECO:0000305" key="4"/>
<accession>Q7Y8D5</accession>
<reference key="1">
    <citation type="journal article" date="2003" name="Mol. Phylogenet. Evol.">
        <title>Mitochondrial phylogeny of hedgehogs and monophyly of Eulipotyphla.</title>
        <authorList>
            <person name="Nikaido M."/>
            <person name="Cao Y."/>
            <person name="Harada M."/>
            <person name="Okada N."/>
            <person name="Hasegawa M."/>
        </authorList>
    </citation>
    <scope>NUCLEOTIDE SEQUENCE [GENOMIC DNA]</scope>
</reference>
<sequence length="98" mass="10803">MSLVYVNVMIAFLISLLGLLMYRSHLMSSLLCLEGMMLSLFILGTIMILNIHFTLASMIPIILLVFAACEAAIGLSLLVMVSNTYGVDYVQNLNLLQC</sequence>
<feature type="chain" id="PRO_0000275136" description="NADH-ubiquinone oxidoreductase chain 4L">
    <location>
        <begin position="1"/>
        <end position="98"/>
    </location>
</feature>
<feature type="transmembrane region" description="Helical" evidence="3">
    <location>
        <begin position="1"/>
        <end position="21"/>
    </location>
</feature>
<feature type="transmembrane region" description="Helical" evidence="3">
    <location>
        <begin position="29"/>
        <end position="49"/>
    </location>
</feature>
<feature type="transmembrane region" description="Helical" evidence="3">
    <location>
        <begin position="61"/>
        <end position="81"/>
    </location>
</feature>
<name>NU4LM_UROTA</name>